<dbReference type="EMBL" id="EF990746">
    <property type="protein sequence ID" value="ABV64400.1"/>
    <property type="molecule type" value="mRNA"/>
</dbReference>
<dbReference type="EMBL" id="EU401856">
    <property type="protein sequence ID" value="ACC77805.1"/>
    <property type="molecule type" value="Genomic_DNA"/>
</dbReference>
<dbReference type="SMR" id="B5KL38"/>
<dbReference type="MEROPS" id="I02.052"/>
<dbReference type="GO" id="GO:0005615">
    <property type="term" value="C:extracellular space"/>
    <property type="evidence" value="ECO:0007669"/>
    <property type="project" value="TreeGrafter"/>
</dbReference>
<dbReference type="GO" id="GO:0004867">
    <property type="term" value="F:serine-type endopeptidase inhibitor activity"/>
    <property type="evidence" value="ECO:0007669"/>
    <property type="project" value="UniProtKB-KW"/>
</dbReference>
<dbReference type="CDD" id="cd22594">
    <property type="entry name" value="Kunitz_textilinin-like"/>
    <property type="match status" value="1"/>
</dbReference>
<dbReference type="FunFam" id="4.10.410.10:FF:000021">
    <property type="entry name" value="Serine protease inhibitor, putative"/>
    <property type="match status" value="1"/>
</dbReference>
<dbReference type="Gene3D" id="4.10.410.10">
    <property type="entry name" value="Pancreatic trypsin inhibitor Kunitz domain"/>
    <property type="match status" value="1"/>
</dbReference>
<dbReference type="InterPro" id="IPR002223">
    <property type="entry name" value="Kunitz_BPTI"/>
</dbReference>
<dbReference type="InterPro" id="IPR036880">
    <property type="entry name" value="Kunitz_BPTI_sf"/>
</dbReference>
<dbReference type="InterPro" id="IPR020901">
    <property type="entry name" value="Prtase_inh_Kunz-CS"/>
</dbReference>
<dbReference type="InterPro" id="IPR050098">
    <property type="entry name" value="TFPI/VKTCI-like"/>
</dbReference>
<dbReference type="PANTHER" id="PTHR10083">
    <property type="entry name" value="KUNITZ-TYPE PROTEASE INHIBITOR-RELATED"/>
    <property type="match status" value="1"/>
</dbReference>
<dbReference type="PANTHER" id="PTHR10083:SF376">
    <property type="entry name" value="SERINE PEPTIDASE INHIBITOR, KUNITZ TYPE, 3"/>
    <property type="match status" value="1"/>
</dbReference>
<dbReference type="Pfam" id="PF00014">
    <property type="entry name" value="Kunitz_BPTI"/>
    <property type="match status" value="1"/>
</dbReference>
<dbReference type="PRINTS" id="PR00759">
    <property type="entry name" value="BASICPTASE"/>
</dbReference>
<dbReference type="SMART" id="SM00131">
    <property type="entry name" value="KU"/>
    <property type="match status" value="1"/>
</dbReference>
<dbReference type="SUPFAM" id="SSF57362">
    <property type="entry name" value="BPTI-like"/>
    <property type="match status" value="1"/>
</dbReference>
<dbReference type="PROSITE" id="PS00280">
    <property type="entry name" value="BPTI_KUNITZ_1"/>
    <property type="match status" value="1"/>
</dbReference>
<dbReference type="PROSITE" id="PS50279">
    <property type="entry name" value="BPTI_KUNITZ_2"/>
    <property type="match status" value="1"/>
</dbReference>
<reference key="1">
    <citation type="journal article" date="2008" name="Cell. Mol. Life Sci.">
        <title>Common evolution of waprin and Kunitz-like toxin families in Australian venomous snakes.</title>
        <authorList>
            <person name="St Pierre L."/>
            <person name="Earl S.T."/>
            <person name="Filippovich I."/>
            <person name="Sorokina N."/>
            <person name="Masci P.P."/>
            <person name="De Jersey J."/>
            <person name="Lavin M.F."/>
        </authorList>
    </citation>
    <scope>NUCLEOTIDE SEQUENCE [GENOMIC DNA / MRNA]</scope>
    <source>
        <tissue>Venom gland</tissue>
    </source>
</reference>
<sequence>MSSGGLLLLLGLLTLWEVLTPVSSKDRPEFCKLPADTGRCKGKFPAFYYHPVHRTCLEFIYGGCKGNPNNFKTIDECERTCAA</sequence>
<name>VKT1_AUSSU</name>
<feature type="signal peptide" evidence="2">
    <location>
        <begin position="1"/>
        <end position="24"/>
    </location>
</feature>
<feature type="chain" id="PRO_5000395597" description="Kunitz-type serine protease inhibitor superbin-1">
    <location>
        <begin position="25"/>
        <end position="83"/>
    </location>
</feature>
<feature type="domain" description="BPTI/Kunitz inhibitor" evidence="3">
    <location>
        <begin position="31"/>
        <end position="81"/>
    </location>
</feature>
<feature type="site" description="Reactive bond for trypsin" evidence="1">
    <location>
        <begin position="41"/>
        <end position="42"/>
    </location>
</feature>
<feature type="disulfide bond" evidence="3">
    <location>
        <begin position="31"/>
        <end position="81"/>
    </location>
</feature>
<feature type="disulfide bond" evidence="3">
    <location>
        <begin position="40"/>
        <end position="64"/>
    </location>
</feature>
<feature type="disulfide bond" evidence="3">
    <location>
        <begin position="56"/>
        <end position="77"/>
    </location>
</feature>
<organism>
    <name type="scientific">Austrelaps superbus</name>
    <name type="common">Lowland copperhead snake</name>
    <name type="synonym">Hoplocephalus superbus</name>
    <dbReference type="NCBI Taxonomy" id="29156"/>
    <lineage>
        <taxon>Eukaryota</taxon>
        <taxon>Metazoa</taxon>
        <taxon>Chordata</taxon>
        <taxon>Craniata</taxon>
        <taxon>Vertebrata</taxon>
        <taxon>Euteleostomi</taxon>
        <taxon>Lepidosauria</taxon>
        <taxon>Squamata</taxon>
        <taxon>Bifurcata</taxon>
        <taxon>Unidentata</taxon>
        <taxon>Episquamata</taxon>
        <taxon>Toxicofera</taxon>
        <taxon>Serpentes</taxon>
        <taxon>Colubroidea</taxon>
        <taxon>Elapidae</taxon>
        <taxon>Hydrophiinae</taxon>
        <taxon>Austrelaps</taxon>
    </lineage>
</organism>
<accession>B5KL38</accession>
<protein>
    <recommendedName>
        <fullName>Kunitz-type serine protease inhibitor superbin-1</fullName>
    </recommendedName>
    <alternativeName>
        <fullName>Superbinin-1</fullName>
    </alternativeName>
</protein>
<proteinExistence type="evidence at transcript level"/>
<keyword id="KW-1015">Disulfide bond</keyword>
<keyword id="KW-0646">Protease inhibitor</keyword>
<keyword id="KW-0964">Secreted</keyword>
<keyword id="KW-0722">Serine protease inhibitor</keyword>
<keyword id="KW-0732">Signal</keyword>
<comment type="function">
    <text evidence="1">Serine protease inhibitor.</text>
</comment>
<comment type="subcellular location">
    <subcellularLocation>
        <location evidence="1">Secreted</location>
    </subcellularLocation>
</comment>
<comment type="tissue specificity">
    <text>Expressed by the venom gland.</text>
</comment>
<comment type="similarity">
    <text evidence="4">Belongs to the venom Kunitz-type family.</text>
</comment>
<evidence type="ECO:0000250" key="1"/>
<evidence type="ECO:0000255" key="2"/>
<evidence type="ECO:0000255" key="3">
    <source>
        <dbReference type="PROSITE-ProRule" id="PRU00031"/>
    </source>
</evidence>
<evidence type="ECO:0000305" key="4"/>